<evidence type="ECO:0000255" key="1">
    <source>
        <dbReference type="HAMAP-Rule" id="MF_01302"/>
    </source>
</evidence>
<evidence type="ECO:0000305" key="2"/>
<comment type="function">
    <text evidence="1">One of the primary rRNA binding proteins, it binds directly to 16S rRNA central domain where it helps coordinate assembly of the platform of the 30S subunit.</text>
</comment>
<comment type="subunit">
    <text evidence="1">Part of the 30S ribosomal subunit. Contacts proteins S5 and S12.</text>
</comment>
<comment type="similarity">
    <text evidence="1">Belongs to the universal ribosomal protein uS8 family.</text>
</comment>
<protein>
    <recommendedName>
        <fullName evidence="1">Small ribosomal subunit protein uS8</fullName>
    </recommendedName>
    <alternativeName>
        <fullName evidence="2">30S ribosomal protein S8</fullName>
    </alternativeName>
</protein>
<keyword id="KW-1185">Reference proteome</keyword>
<keyword id="KW-0687">Ribonucleoprotein</keyword>
<keyword id="KW-0689">Ribosomal protein</keyword>
<keyword id="KW-0694">RNA-binding</keyword>
<keyword id="KW-0699">rRNA-binding</keyword>
<accession>B5YG33</accession>
<organism>
    <name type="scientific">Thermodesulfovibrio yellowstonii (strain ATCC 51303 / DSM 11347 / YP87)</name>
    <dbReference type="NCBI Taxonomy" id="289376"/>
    <lineage>
        <taxon>Bacteria</taxon>
        <taxon>Pseudomonadati</taxon>
        <taxon>Nitrospirota</taxon>
        <taxon>Thermodesulfovibrionia</taxon>
        <taxon>Thermodesulfovibrionales</taxon>
        <taxon>Thermodesulfovibrionaceae</taxon>
        <taxon>Thermodesulfovibrio</taxon>
    </lineage>
</organism>
<sequence length="131" mass="14703">MITDPISDMLTRIRNAIKVKADKVDIPASRMKIEISKILKEEGFIKSYKIIKDKKQGIIRINLKYTSEGDSVISNLQRISKPGRRVYVSKDEIPHVMGGLGVAILTTSQGVMTDKECRHKGVGGEVICYIW</sequence>
<feature type="chain" id="PRO_1000140631" description="Small ribosomal subunit protein uS8">
    <location>
        <begin position="1"/>
        <end position="131"/>
    </location>
</feature>
<gene>
    <name evidence="1" type="primary">rpsH</name>
    <name type="ordered locus">THEYE_A1432</name>
</gene>
<reference key="1">
    <citation type="submission" date="2008-08" db="EMBL/GenBank/DDBJ databases">
        <title>The complete genome sequence of Thermodesulfovibrio yellowstonii strain ATCC 51303 / DSM 11347 / YP87.</title>
        <authorList>
            <person name="Dodson R.J."/>
            <person name="Durkin A.S."/>
            <person name="Wu M."/>
            <person name="Eisen J."/>
            <person name="Sutton G."/>
        </authorList>
    </citation>
    <scope>NUCLEOTIDE SEQUENCE [LARGE SCALE GENOMIC DNA]</scope>
    <source>
        <strain>ATCC 51303 / DSM 11347 / YP87</strain>
    </source>
</reference>
<proteinExistence type="inferred from homology"/>
<name>RS8_THEYD</name>
<dbReference type="EMBL" id="CP001147">
    <property type="protein sequence ID" value="ACI20486.1"/>
    <property type="molecule type" value="Genomic_DNA"/>
</dbReference>
<dbReference type="RefSeq" id="WP_012545222.1">
    <property type="nucleotide sequence ID" value="NC_011296.1"/>
</dbReference>
<dbReference type="RefSeq" id="YP_002249231.1">
    <property type="nucleotide sequence ID" value="NC_011296.1"/>
</dbReference>
<dbReference type="SMR" id="B5YG33"/>
<dbReference type="FunCoup" id="B5YG33">
    <property type="interactions" value="425"/>
</dbReference>
<dbReference type="STRING" id="289376.THEYE_A1432"/>
<dbReference type="EnsemblBacteria" id="ACI20486">
    <property type="protein sequence ID" value="ACI20486"/>
    <property type="gene ID" value="THEYE_A1432"/>
</dbReference>
<dbReference type="KEGG" id="tye:THEYE_A1432"/>
<dbReference type="PATRIC" id="fig|289376.4.peg.1393"/>
<dbReference type="eggNOG" id="COG0096">
    <property type="taxonomic scope" value="Bacteria"/>
</dbReference>
<dbReference type="HOGENOM" id="CLU_098428_0_2_0"/>
<dbReference type="InParanoid" id="B5YG33"/>
<dbReference type="OrthoDB" id="9802617at2"/>
<dbReference type="Proteomes" id="UP000000718">
    <property type="component" value="Chromosome"/>
</dbReference>
<dbReference type="GO" id="GO:0022627">
    <property type="term" value="C:cytosolic small ribosomal subunit"/>
    <property type="evidence" value="ECO:0000318"/>
    <property type="project" value="GO_Central"/>
</dbReference>
<dbReference type="GO" id="GO:0019843">
    <property type="term" value="F:rRNA binding"/>
    <property type="evidence" value="ECO:0007669"/>
    <property type="project" value="UniProtKB-UniRule"/>
</dbReference>
<dbReference type="GO" id="GO:0003735">
    <property type="term" value="F:structural constituent of ribosome"/>
    <property type="evidence" value="ECO:0000318"/>
    <property type="project" value="GO_Central"/>
</dbReference>
<dbReference type="GO" id="GO:0006412">
    <property type="term" value="P:translation"/>
    <property type="evidence" value="ECO:0007669"/>
    <property type="project" value="UniProtKB-UniRule"/>
</dbReference>
<dbReference type="FunFam" id="3.30.1370.30:FF:000002">
    <property type="entry name" value="30S ribosomal protein S8"/>
    <property type="match status" value="1"/>
</dbReference>
<dbReference type="FunFam" id="3.30.1490.10:FF:000001">
    <property type="entry name" value="30S ribosomal protein S8"/>
    <property type="match status" value="1"/>
</dbReference>
<dbReference type="Gene3D" id="3.30.1370.30">
    <property type="match status" value="1"/>
</dbReference>
<dbReference type="Gene3D" id="3.30.1490.10">
    <property type="match status" value="1"/>
</dbReference>
<dbReference type="HAMAP" id="MF_01302_B">
    <property type="entry name" value="Ribosomal_uS8_B"/>
    <property type="match status" value="1"/>
</dbReference>
<dbReference type="InterPro" id="IPR000630">
    <property type="entry name" value="Ribosomal_uS8"/>
</dbReference>
<dbReference type="InterPro" id="IPR035987">
    <property type="entry name" value="Ribosomal_uS8_sf"/>
</dbReference>
<dbReference type="NCBIfam" id="NF001109">
    <property type="entry name" value="PRK00136.1"/>
    <property type="match status" value="1"/>
</dbReference>
<dbReference type="PANTHER" id="PTHR11758">
    <property type="entry name" value="40S RIBOSOMAL PROTEIN S15A"/>
    <property type="match status" value="1"/>
</dbReference>
<dbReference type="Pfam" id="PF00410">
    <property type="entry name" value="Ribosomal_S8"/>
    <property type="match status" value="1"/>
</dbReference>
<dbReference type="SUPFAM" id="SSF56047">
    <property type="entry name" value="Ribosomal protein S8"/>
    <property type="match status" value="1"/>
</dbReference>